<comment type="function">
    <text evidence="1">IGPS catalyzes the conversion of PRFAR and glutamine to IGP, AICAR and glutamate. The HisF subunit catalyzes the cyclization activity that produces IGP and AICAR from PRFAR using the ammonia provided by the HisH subunit.</text>
</comment>
<comment type="catalytic activity">
    <reaction evidence="1">
        <text>5-[(5-phospho-1-deoxy-D-ribulos-1-ylimino)methylamino]-1-(5-phospho-beta-D-ribosyl)imidazole-4-carboxamide + L-glutamine = D-erythro-1-(imidazol-4-yl)glycerol 3-phosphate + 5-amino-1-(5-phospho-beta-D-ribosyl)imidazole-4-carboxamide + L-glutamate + H(+)</text>
        <dbReference type="Rhea" id="RHEA:24793"/>
        <dbReference type="ChEBI" id="CHEBI:15378"/>
        <dbReference type="ChEBI" id="CHEBI:29985"/>
        <dbReference type="ChEBI" id="CHEBI:58278"/>
        <dbReference type="ChEBI" id="CHEBI:58359"/>
        <dbReference type="ChEBI" id="CHEBI:58475"/>
        <dbReference type="ChEBI" id="CHEBI:58525"/>
        <dbReference type="EC" id="4.3.2.10"/>
    </reaction>
</comment>
<comment type="pathway">
    <text evidence="1">Amino-acid biosynthesis; L-histidine biosynthesis; L-histidine from 5-phospho-alpha-D-ribose 1-diphosphate: step 5/9.</text>
</comment>
<comment type="subunit">
    <text evidence="1">Heterodimer of HisH and HisF.</text>
</comment>
<comment type="subcellular location">
    <subcellularLocation>
        <location evidence="1">Cytoplasm</location>
    </subcellularLocation>
</comment>
<comment type="similarity">
    <text evidence="1">Belongs to the HisA/HisF family.</text>
</comment>
<feature type="chain" id="PRO_1000063024" description="Imidazole glycerol phosphate synthase subunit HisF">
    <location>
        <begin position="1"/>
        <end position="252"/>
    </location>
</feature>
<feature type="active site" evidence="1">
    <location>
        <position position="11"/>
    </location>
</feature>
<feature type="active site" evidence="1">
    <location>
        <position position="130"/>
    </location>
</feature>
<proteinExistence type="inferred from homology"/>
<name>HIS6_AZOSB</name>
<reference key="1">
    <citation type="journal article" date="2006" name="Nat. Biotechnol.">
        <title>Complete genome of the mutualistic, N2-fixing grass endophyte Azoarcus sp. strain BH72.</title>
        <authorList>
            <person name="Krause A."/>
            <person name="Ramakumar A."/>
            <person name="Bartels D."/>
            <person name="Battistoni F."/>
            <person name="Bekel T."/>
            <person name="Boch J."/>
            <person name="Boehm M."/>
            <person name="Friedrich F."/>
            <person name="Hurek T."/>
            <person name="Krause L."/>
            <person name="Linke B."/>
            <person name="McHardy A.C."/>
            <person name="Sarkar A."/>
            <person name="Schneiker S."/>
            <person name="Syed A.A."/>
            <person name="Thauer R."/>
            <person name="Vorhoelter F.-J."/>
            <person name="Weidner S."/>
            <person name="Puehler A."/>
            <person name="Reinhold-Hurek B."/>
            <person name="Kaiser O."/>
            <person name="Goesmann A."/>
        </authorList>
    </citation>
    <scope>NUCLEOTIDE SEQUENCE [LARGE SCALE GENOMIC DNA]</scope>
    <source>
        <strain>BH72</strain>
    </source>
</reference>
<keyword id="KW-0028">Amino-acid biosynthesis</keyword>
<keyword id="KW-0963">Cytoplasm</keyword>
<keyword id="KW-0368">Histidine biosynthesis</keyword>
<keyword id="KW-0456">Lyase</keyword>
<keyword id="KW-1185">Reference proteome</keyword>
<accession>A1KAV4</accession>
<gene>
    <name evidence="1" type="primary">hisF</name>
    <name type="ordered locus">azo3344</name>
</gene>
<sequence>MLAKRIIPCLDVSAGRVVKGVNFVDLRDAGDPVEVARRYDAQGADEITFLDITASSDDRDIILHVVERVAEQVFIPLTVGGGVRSVEDVRRLLNAGADKVSINTAAVNNPSIVAEASGKVGSQCIVVAVDAKQTGPGKWEVFTHGGRNPTGLDAIEWARKVESLGAGEILLTSMDRDGTKIGFDLGLTRAVSDAVGIPVIASGGVGSLEHLADGVSEGRADAVLAASIFHFGQHTVREAKELMRTRGIEVRL</sequence>
<protein>
    <recommendedName>
        <fullName evidence="1">Imidazole glycerol phosphate synthase subunit HisF</fullName>
        <ecNumber evidence="1">4.3.2.10</ecNumber>
    </recommendedName>
    <alternativeName>
        <fullName evidence="1">IGP synthase cyclase subunit</fullName>
    </alternativeName>
    <alternativeName>
        <fullName evidence="1">IGP synthase subunit HisF</fullName>
    </alternativeName>
    <alternativeName>
        <fullName evidence="1">ImGP synthase subunit HisF</fullName>
        <shortName evidence="1">IGPS subunit HisF</shortName>
    </alternativeName>
</protein>
<organism>
    <name type="scientific">Azoarcus sp. (strain BH72)</name>
    <dbReference type="NCBI Taxonomy" id="418699"/>
    <lineage>
        <taxon>Bacteria</taxon>
        <taxon>Pseudomonadati</taxon>
        <taxon>Pseudomonadota</taxon>
        <taxon>Betaproteobacteria</taxon>
        <taxon>Rhodocyclales</taxon>
        <taxon>Zoogloeaceae</taxon>
        <taxon>Azoarcus</taxon>
    </lineage>
</organism>
<dbReference type="EC" id="4.3.2.10" evidence="1"/>
<dbReference type="EMBL" id="AM406670">
    <property type="protein sequence ID" value="CAL95960.1"/>
    <property type="molecule type" value="Genomic_DNA"/>
</dbReference>
<dbReference type="RefSeq" id="WP_011767067.1">
    <property type="nucleotide sequence ID" value="NZ_CP016210.1"/>
</dbReference>
<dbReference type="SMR" id="A1KAV4"/>
<dbReference type="STRING" id="62928.azo3344"/>
<dbReference type="KEGG" id="aoa:dqs_3481"/>
<dbReference type="KEGG" id="azo:azo3344"/>
<dbReference type="eggNOG" id="COG0107">
    <property type="taxonomic scope" value="Bacteria"/>
</dbReference>
<dbReference type="HOGENOM" id="CLU_048577_4_0_4"/>
<dbReference type="OrthoDB" id="9781903at2"/>
<dbReference type="UniPathway" id="UPA00031">
    <property type="reaction ID" value="UER00010"/>
</dbReference>
<dbReference type="Proteomes" id="UP000002588">
    <property type="component" value="Chromosome"/>
</dbReference>
<dbReference type="GO" id="GO:0005737">
    <property type="term" value="C:cytoplasm"/>
    <property type="evidence" value="ECO:0007669"/>
    <property type="project" value="UniProtKB-SubCell"/>
</dbReference>
<dbReference type="GO" id="GO:0000107">
    <property type="term" value="F:imidazoleglycerol-phosphate synthase activity"/>
    <property type="evidence" value="ECO:0007669"/>
    <property type="project" value="UniProtKB-UniRule"/>
</dbReference>
<dbReference type="GO" id="GO:0016829">
    <property type="term" value="F:lyase activity"/>
    <property type="evidence" value="ECO:0007669"/>
    <property type="project" value="UniProtKB-KW"/>
</dbReference>
<dbReference type="GO" id="GO:0000105">
    <property type="term" value="P:L-histidine biosynthetic process"/>
    <property type="evidence" value="ECO:0007669"/>
    <property type="project" value="UniProtKB-UniRule"/>
</dbReference>
<dbReference type="CDD" id="cd04731">
    <property type="entry name" value="HisF"/>
    <property type="match status" value="1"/>
</dbReference>
<dbReference type="FunFam" id="3.20.20.70:FF:000006">
    <property type="entry name" value="Imidazole glycerol phosphate synthase subunit HisF"/>
    <property type="match status" value="1"/>
</dbReference>
<dbReference type="Gene3D" id="3.20.20.70">
    <property type="entry name" value="Aldolase class I"/>
    <property type="match status" value="1"/>
</dbReference>
<dbReference type="HAMAP" id="MF_01013">
    <property type="entry name" value="HisF"/>
    <property type="match status" value="1"/>
</dbReference>
<dbReference type="InterPro" id="IPR013785">
    <property type="entry name" value="Aldolase_TIM"/>
</dbReference>
<dbReference type="InterPro" id="IPR006062">
    <property type="entry name" value="His_biosynth"/>
</dbReference>
<dbReference type="InterPro" id="IPR004651">
    <property type="entry name" value="HisF"/>
</dbReference>
<dbReference type="InterPro" id="IPR050064">
    <property type="entry name" value="IGPS_HisA/HisF"/>
</dbReference>
<dbReference type="InterPro" id="IPR011060">
    <property type="entry name" value="RibuloseP-bd_barrel"/>
</dbReference>
<dbReference type="NCBIfam" id="TIGR00735">
    <property type="entry name" value="hisF"/>
    <property type="match status" value="1"/>
</dbReference>
<dbReference type="PANTHER" id="PTHR21235:SF2">
    <property type="entry name" value="IMIDAZOLE GLYCEROL PHOSPHATE SYNTHASE HISHF"/>
    <property type="match status" value="1"/>
</dbReference>
<dbReference type="PANTHER" id="PTHR21235">
    <property type="entry name" value="IMIDAZOLE GLYCEROL PHOSPHATE SYNTHASE SUBUNIT HISF/H IGP SYNTHASE SUBUNIT HISF/H"/>
    <property type="match status" value="1"/>
</dbReference>
<dbReference type="Pfam" id="PF00977">
    <property type="entry name" value="His_biosynth"/>
    <property type="match status" value="1"/>
</dbReference>
<dbReference type="SUPFAM" id="SSF51366">
    <property type="entry name" value="Ribulose-phoshate binding barrel"/>
    <property type="match status" value="1"/>
</dbReference>
<evidence type="ECO:0000255" key="1">
    <source>
        <dbReference type="HAMAP-Rule" id="MF_01013"/>
    </source>
</evidence>